<name>RL31_CANGA</name>
<dbReference type="EMBL" id="CR380950">
    <property type="protein sequence ID" value="CAG58351.1"/>
    <property type="molecule type" value="Genomic_DNA"/>
</dbReference>
<dbReference type="RefSeq" id="XP_445440.1">
    <property type="nucleotide sequence ID" value="XM_445440.1"/>
</dbReference>
<dbReference type="SMR" id="Q6FWF4"/>
<dbReference type="FunCoup" id="Q6FWF4">
    <property type="interactions" value="990"/>
</dbReference>
<dbReference type="STRING" id="284593.Q6FWF4"/>
<dbReference type="EnsemblFungi" id="CAGL0D00616g-T">
    <property type="protein sequence ID" value="CAGL0D00616g-T-p1"/>
    <property type="gene ID" value="CAGL0D00616g"/>
</dbReference>
<dbReference type="KEGG" id="cgr:2887139"/>
<dbReference type="CGD" id="CAL0128133">
    <property type="gene designation" value="CAGL0D00616g"/>
</dbReference>
<dbReference type="VEuPathDB" id="FungiDB:B1J91_D00616g"/>
<dbReference type="VEuPathDB" id="FungiDB:CAGL0D00616g"/>
<dbReference type="eggNOG" id="KOG0893">
    <property type="taxonomic scope" value="Eukaryota"/>
</dbReference>
<dbReference type="HOGENOM" id="CLU_112570_1_1_1"/>
<dbReference type="InParanoid" id="Q6FWF4"/>
<dbReference type="OMA" id="EVWKQGI"/>
<dbReference type="Proteomes" id="UP000002428">
    <property type="component" value="Chromosome D"/>
</dbReference>
<dbReference type="GO" id="GO:0022625">
    <property type="term" value="C:cytosolic large ribosomal subunit"/>
    <property type="evidence" value="ECO:0007669"/>
    <property type="project" value="TreeGrafter"/>
</dbReference>
<dbReference type="GO" id="GO:0062040">
    <property type="term" value="C:fungal biofilm matrix"/>
    <property type="evidence" value="ECO:0000314"/>
    <property type="project" value="CGD"/>
</dbReference>
<dbReference type="GO" id="GO:0030684">
    <property type="term" value="C:preribosome"/>
    <property type="evidence" value="ECO:0007669"/>
    <property type="project" value="EnsemblFungi"/>
</dbReference>
<dbReference type="GO" id="GO:0003735">
    <property type="term" value="F:structural constituent of ribosome"/>
    <property type="evidence" value="ECO:0007669"/>
    <property type="project" value="InterPro"/>
</dbReference>
<dbReference type="GO" id="GO:0002181">
    <property type="term" value="P:cytoplasmic translation"/>
    <property type="evidence" value="ECO:0007669"/>
    <property type="project" value="TreeGrafter"/>
</dbReference>
<dbReference type="CDD" id="cd00463">
    <property type="entry name" value="Ribosomal_L31e"/>
    <property type="match status" value="1"/>
</dbReference>
<dbReference type="FunFam" id="3.10.440.10:FF:000001">
    <property type="entry name" value="60S ribosomal protein L31"/>
    <property type="match status" value="1"/>
</dbReference>
<dbReference type="Gene3D" id="3.10.440.10">
    <property type="match status" value="1"/>
</dbReference>
<dbReference type="InterPro" id="IPR000054">
    <property type="entry name" value="Ribosomal_eL31"/>
</dbReference>
<dbReference type="InterPro" id="IPR020052">
    <property type="entry name" value="Ribosomal_eL31_CS"/>
</dbReference>
<dbReference type="InterPro" id="IPR023621">
    <property type="entry name" value="Ribosomal_eL31_dom_sf"/>
</dbReference>
<dbReference type="PANTHER" id="PTHR10956">
    <property type="entry name" value="60S RIBOSOMAL PROTEIN L31"/>
    <property type="match status" value="1"/>
</dbReference>
<dbReference type="PANTHER" id="PTHR10956:SF0">
    <property type="entry name" value="60S RIBOSOMAL PROTEIN L31"/>
    <property type="match status" value="1"/>
</dbReference>
<dbReference type="Pfam" id="PF01198">
    <property type="entry name" value="Ribosomal_L31e"/>
    <property type="match status" value="1"/>
</dbReference>
<dbReference type="SMART" id="SM01380">
    <property type="entry name" value="Ribosomal_L31e"/>
    <property type="match status" value="1"/>
</dbReference>
<dbReference type="SUPFAM" id="SSF54575">
    <property type="entry name" value="Ribosomal protein L31e"/>
    <property type="match status" value="1"/>
</dbReference>
<dbReference type="PROSITE" id="PS01144">
    <property type="entry name" value="RIBOSOMAL_L31E"/>
    <property type="match status" value="1"/>
</dbReference>
<sequence>MAGLKDVVTREYTINMHKRLHGVSFKKRAPKAVKEIKKFAKLHMGTEDVRLAPELNQEIWKRGVKGVAFRLRLRISRKRNEEENAKNPLFSYVEPVFVASAKGLQTTVVEEDA</sequence>
<proteinExistence type="inferred from homology"/>
<accession>Q6FWF4</accession>
<protein>
    <recommendedName>
        <fullName evidence="1">Large ribosomal subunit protein eL31</fullName>
    </recommendedName>
    <alternativeName>
        <fullName>60S ribosomal protein L31</fullName>
    </alternativeName>
</protein>
<keyword id="KW-1185">Reference proteome</keyword>
<keyword id="KW-0687">Ribonucleoprotein</keyword>
<keyword id="KW-0689">Ribosomal protein</keyword>
<feature type="chain" id="PRO_0000153784" description="Large ribosomal subunit protein eL31">
    <location>
        <begin position="1"/>
        <end position="113"/>
    </location>
</feature>
<organism>
    <name type="scientific">Candida glabrata (strain ATCC 2001 / BCRC 20586 / JCM 3761 / NBRC 0622 / NRRL Y-65 / CBS 138)</name>
    <name type="common">Yeast</name>
    <name type="synonym">Nakaseomyces glabratus</name>
    <dbReference type="NCBI Taxonomy" id="284593"/>
    <lineage>
        <taxon>Eukaryota</taxon>
        <taxon>Fungi</taxon>
        <taxon>Dikarya</taxon>
        <taxon>Ascomycota</taxon>
        <taxon>Saccharomycotina</taxon>
        <taxon>Saccharomycetes</taxon>
        <taxon>Saccharomycetales</taxon>
        <taxon>Saccharomycetaceae</taxon>
        <taxon>Nakaseomyces</taxon>
    </lineage>
</organism>
<evidence type="ECO:0000305" key="1"/>
<gene>
    <name type="primary">RPL31</name>
    <name type="ordered locus">CAGL0D00616g</name>
</gene>
<comment type="similarity">
    <text evidence="1">Belongs to the eukaryotic ribosomal protein eL31 family.</text>
</comment>
<reference key="1">
    <citation type="journal article" date="2004" name="Nature">
        <title>Genome evolution in yeasts.</title>
        <authorList>
            <person name="Dujon B."/>
            <person name="Sherman D."/>
            <person name="Fischer G."/>
            <person name="Durrens P."/>
            <person name="Casaregola S."/>
            <person name="Lafontaine I."/>
            <person name="de Montigny J."/>
            <person name="Marck C."/>
            <person name="Neuveglise C."/>
            <person name="Talla E."/>
            <person name="Goffard N."/>
            <person name="Frangeul L."/>
            <person name="Aigle M."/>
            <person name="Anthouard V."/>
            <person name="Babour A."/>
            <person name="Barbe V."/>
            <person name="Barnay S."/>
            <person name="Blanchin S."/>
            <person name="Beckerich J.-M."/>
            <person name="Beyne E."/>
            <person name="Bleykasten C."/>
            <person name="Boisrame A."/>
            <person name="Boyer J."/>
            <person name="Cattolico L."/>
            <person name="Confanioleri F."/>
            <person name="de Daruvar A."/>
            <person name="Despons L."/>
            <person name="Fabre E."/>
            <person name="Fairhead C."/>
            <person name="Ferry-Dumazet H."/>
            <person name="Groppi A."/>
            <person name="Hantraye F."/>
            <person name="Hennequin C."/>
            <person name="Jauniaux N."/>
            <person name="Joyet P."/>
            <person name="Kachouri R."/>
            <person name="Kerrest A."/>
            <person name="Koszul R."/>
            <person name="Lemaire M."/>
            <person name="Lesur I."/>
            <person name="Ma L."/>
            <person name="Muller H."/>
            <person name="Nicaud J.-M."/>
            <person name="Nikolski M."/>
            <person name="Oztas S."/>
            <person name="Ozier-Kalogeropoulos O."/>
            <person name="Pellenz S."/>
            <person name="Potier S."/>
            <person name="Richard G.-F."/>
            <person name="Straub M.-L."/>
            <person name="Suleau A."/>
            <person name="Swennen D."/>
            <person name="Tekaia F."/>
            <person name="Wesolowski-Louvel M."/>
            <person name="Westhof E."/>
            <person name="Wirth B."/>
            <person name="Zeniou-Meyer M."/>
            <person name="Zivanovic Y."/>
            <person name="Bolotin-Fukuhara M."/>
            <person name="Thierry A."/>
            <person name="Bouchier C."/>
            <person name="Caudron B."/>
            <person name="Scarpelli C."/>
            <person name="Gaillardin C."/>
            <person name="Weissenbach J."/>
            <person name="Wincker P."/>
            <person name="Souciet J.-L."/>
        </authorList>
    </citation>
    <scope>NUCLEOTIDE SEQUENCE [LARGE SCALE GENOMIC DNA]</scope>
    <source>
        <strain>ATCC 2001 / BCRC 20586 / JCM 3761 / NBRC 0622 / NRRL Y-65 / CBS 138</strain>
    </source>
</reference>